<organism>
    <name type="scientific">Drosophila melanogaster</name>
    <name type="common">Fruit fly</name>
    <dbReference type="NCBI Taxonomy" id="7227"/>
    <lineage>
        <taxon>Eukaryota</taxon>
        <taxon>Metazoa</taxon>
        <taxon>Ecdysozoa</taxon>
        <taxon>Arthropoda</taxon>
        <taxon>Hexapoda</taxon>
        <taxon>Insecta</taxon>
        <taxon>Pterygota</taxon>
        <taxon>Neoptera</taxon>
        <taxon>Endopterygota</taxon>
        <taxon>Diptera</taxon>
        <taxon>Brachycera</taxon>
        <taxon>Muscomorpha</taxon>
        <taxon>Ephydroidea</taxon>
        <taxon>Drosophilidae</taxon>
        <taxon>Drosophila</taxon>
        <taxon>Sophophora</taxon>
    </lineage>
</organism>
<gene>
    <name type="primary">Su(z)2</name>
    <name type="ORF">CG3905</name>
</gene>
<proteinExistence type="evidence at transcript level"/>
<name>SUZ2_DROME</name>
<comment type="function">
    <text evidence="3">Regulates expression of the homeotic selector genes by influencing higher-order chromatin structure through interaction with other proteins.</text>
</comment>
<comment type="subcellular location">
    <subcellularLocation>
        <location evidence="4">Nucleus</location>
    </subcellularLocation>
</comment>
<dbReference type="EMBL" id="X56798">
    <property type="protein sequence ID" value="CAA40134.1"/>
    <property type="molecule type" value="Genomic_DNA"/>
</dbReference>
<dbReference type="EMBL" id="X56799">
    <property type="protein sequence ID" value="CAA40135.1"/>
    <property type="molecule type" value="mRNA"/>
</dbReference>
<dbReference type="EMBL" id="AE013599">
    <property type="protein sequence ID" value="AAF58433.1"/>
    <property type="molecule type" value="Genomic_DNA"/>
</dbReference>
<dbReference type="PIR" id="S14871">
    <property type="entry name" value="S14871"/>
</dbReference>
<dbReference type="RefSeq" id="NP_001163134.1">
    <property type="nucleotide sequence ID" value="NM_001169663.3"/>
</dbReference>
<dbReference type="RefSeq" id="NP_523726.2">
    <property type="nucleotide sequence ID" value="NM_079002.3"/>
</dbReference>
<dbReference type="SMR" id="P25172"/>
<dbReference type="BioGRID" id="62202">
    <property type="interactions" value="18"/>
</dbReference>
<dbReference type="ComplexPortal" id="CPX-2590">
    <property type="entry name" value="Polycomb repressive complex 1, Su(Z)2 variant"/>
</dbReference>
<dbReference type="FunCoup" id="P25172">
    <property type="interactions" value="316"/>
</dbReference>
<dbReference type="IntAct" id="P25172">
    <property type="interactions" value="5"/>
</dbReference>
<dbReference type="STRING" id="7227.FBpp0303463"/>
<dbReference type="GlyGen" id="P25172">
    <property type="glycosylation" value="6 sites, 1 O-linked glycan (1 site)"/>
</dbReference>
<dbReference type="PaxDb" id="7227-FBpp0289616"/>
<dbReference type="EnsemblMetazoa" id="FBtr0087793">
    <property type="protein sequence ID" value="FBpp0086906"/>
    <property type="gene ID" value="FBgn0265623"/>
</dbReference>
<dbReference type="EnsemblMetazoa" id="FBtr0300387">
    <property type="protein sequence ID" value="FBpp0289616"/>
    <property type="gene ID" value="FBgn0265623"/>
</dbReference>
<dbReference type="GeneID" id="36432"/>
<dbReference type="KEGG" id="dme:Dmel_CG3905"/>
<dbReference type="AGR" id="FB:FBgn0265623"/>
<dbReference type="CTD" id="36432"/>
<dbReference type="FlyBase" id="FBgn0265623">
    <property type="gene designation" value="Su(z)2"/>
</dbReference>
<dbReference type="VEuPathDB" id="VectorBase:FBgn0265623"/>
<dbReference type="eggNOG" id="KOG2660">
    <property type="taxonomic scope" value="Eukaryota"/>
</dbReference>
<dbReference type="GeneTree" id="ENSGT00940000173039"/>
<dbReference type="HOGENOM" id="CLU_251917_0_0_1"/>
<dbReference type="InParanoid" id="P25172"/>
<dbReference type="OMA" id="NHKAHKL"/>
<dbReference type="OrthoDB" id="1305878at2759"/>
<dbReference type="PhylomeDB" id="P25172"/>
<dbReference type="SignaLink" id="P25172"/>
<dbReference type="BioGRID-ORCS" id="36432">
    <property type="hits" value="0 hits in 3 CRISPR screens"/>
</dbReference>
<dbReference type="GenomeRNAi" id="36432"/>
<dbReference type="PRO" id="PR:P25172"/>
<dbReference type="Proteomes" id="UP000000803">
    <property type="component" value="Chromosome 2R"/>
</dbReference>
<dbReference type="Bgee" id="FBgn0265623">
    <property type="expression patterns" value="Expressed in adult tracheocyte (Drosophila) in body wall and 229 other cell types or tissues"/>
</dbReference>
<dbReference type="ExpressionAtlas" id="P25172">
    <property type="expression patterns" value="baseline and differential"/>
</dbReference>
<dbReference type="GO" id="GO:0005634">
    <property type="term" value="C:nucleus"/>
    <property type="evidence" value="ECO:0000314"/>
    <property type="project" value="FlyBase"/>
</dbReference>
<dbReference type="GO" id="GO:0035102">
    <property type="term" value="C:PRC1 complex"/>
    <property type="evidence" value="ECO:0000314"/>
    <property type="project" value="FlyBase"/>
</dbReference>
<dbReference type="GO" id="GO:0003677">
    <property type="term" value="F:DNA binding"/>
    <property type="evidence" value="ECO:0000314"/>
    <property type="project" value="FlyBase"/>
</dbReference>
<dbReference type="GO" id="GO:1990841">
    <property type="term" value="F:promoter-specific chromatin binding"/>
    <property type="evidence" value="ECO:0000318"/>
    <property type="project" value="GO_Central"/>
</dbReference>
<dbReference type="GO" id="GO:0008270">
    <property type="term" value="F:zinc ion binding"/>
    <property type="evidence" value="ECO:0000255"/>
    <property type="project" value="FlyBase"/>
</dbReference>
<dbReference type="GO" id="GO:0031507">
    <property type="term" value="P:heterochromatin formation"/>
    <property type="evidence" value="ECO:0000314"/>
    <property type="project" value="FlyBase"/>
</dbReference>
<dbReference type="GO" id="GO:0000122">
    <property type="term" value="P:negative regulation of transcription by RNA polymerase II"/>
    <property type="evidence" value="ECO:0000318"/>
    <property type="project" value="GO_Central"/>
</dbReference>
<dbReference type="CDD" id="cd17082">
    <property type="entry name" value="RAWUL_PCGF2_like"/>
    <property type="match status" value="1"/>
</dbReference>
<dbReference type="CDD" id="cd16737">
    <property type="entry name" value="RING-HC_PCGF5"/>
    <property type="match status" value="1"/>
</dbReference>
<dbReference type="FunFam" id="3.30.40.10:FF:000833">
    <property type="entry name" value="Suppressor 2 of zeste 4-31"/>
    <property type="match status" value="1"/>
</dbReference>
<dbReference type="FunFam" id="3.10.20.90:FF:000522">
    <property type="entry name" value="Suppressor 2 of zeste h29"/>
    <property type="match status" value="1"/>
</dbReference>
<dbReference type="Gene3D" id="3.10.20.90">
    <property type="entry name" value="Phosphatidylinositol 3-kinase Catalytic Subunit, Chain A, domain 1"/>
    <property type="match status" value="1"/>
</dbReference>
<dbReference type="Gene3D" id="3.30.40.10">
    <property type="entry name" value="Zinc/RING finger domain, C3HC4 (zinc finger)"/>
    <property type="match status" value="1"/>
</dbReference>
<dbReference type="InterPro" id="IPR032443">
    <property type="entry name" value="RAWUL"/>
</dbReference>
<dbReference type="InterPro" id="IPR018957">
    <property type="entry name" value="Znf_C3HC4_RING-type"/>
</dbReference>
<dbReference type="InterPro" id="IPR001841">
    <property type="entry name" value="Znf_RING"/>
</dbReference>
<dbReference type="InterPro" id="IPR013083">
    <property type="entry name" value="Znf_RING/FYVE/PHD"/>
</dbReference>
<dbReference type="InterPro" id="IPR017907">
    <property type="entry name" value="Znf_RING_CS"/>
</dbReference>
<dbReference type="PANTHER" id="PTHR10825:SF29">
    <property type="entry name" value="POLYCOMB GROUP RING FINGER PROTEIN 1"/>
    <property type="match status" value="1"/>
</dbReference>
<dbReference type="PANTHER" id="PTHR10825">
    <property type="entry name" value="RING FINGER DOMAIN-CONTAINING, POLYCOMB GROUP COMPONENT"/>
    <property type="match status" value="1"/>
</dbReference>
<dbReference type="Pfam" id="PF16207">
    <property type="entry name" value="RAWUL"/>
    <property type="match status" value="1"/>
</dbReference>
<dbReference type="Pfam" id="PF00097">
    <property type="entry name" value="zf-C3HC4"/>
    <property type="match status" value="1"/>
</dbReference>
<dbReference type="SUPFAM" id="SSF57850">
    <property type="entry name" value="RING/U-box"/>
    <property type="match status" value="1"/>
</dbReference>
<dbReference type="PROSITE" id="PS00518">
    <property type="entry name" value="ZF_RING_1"/>
    <property type="match status" value="1"/>
</dbReference>
<dbReference type="PROSITE" id="PS50089">
    <property type="entry name" value="ZF_RING_2"/>
    <property type="match status" value="1"/>
</dbReference>
<evidence type="ECO:0000255" key="1">
    <source>
        <dbReference type="PROSITE-ProRule" id="PRU00175"/>
    </source>
</evidence>
<evidence type="ECO:0000256" key="2">
    <source>
        <dbReference type="SAM" id="MobiDB-lite"/>
    </source>
</evidence>
<evidence type="ECO:0000269" key="3">
    <source>
    </source>
</evidence>
<evidence type="ECO:0000305" key="4"/>
<reference key="1">
    <citation type="journal article" date="1991" name="Nucleic Acids Res.">
        <title>The sequence of the Drosophila regulatory gene Suppressor two of zeste.</title>
        <authorList>
            <person name="Brunk B.P."/>
            <person name="Adler P.N."/>
        </authorList>
    </citation>
    <scope>NUCLEOTIDE SEQUENCE [MRNA]</scope>
    <scope>FUNCTION</scope>
    <source>
        <strain>Canton-S</strain>
        <tissue>Embryo</tissue>
    </source>
</reference>
<reference key="2">
    <citation type="journal article" date="2000" name="Science">
        <title>The genome sequence of Drosophila melanogaster.</title>
        <authorList>
            <person name="Adams M.D."/>
            <person name="Celniker S.E."/>
            <person name="Holt R.A."/>
            <person name="Evans C.A."/>
            <person name="Gocayne J.D."/>
            <person name="Amanatides P.G."/>
            <person name="Scherer S.E."/>
            <person name="Li P.W."/>
            <person name="Hoskins R.A."/>
            <person name="Galle R.F."/>
            <person name="George R.A."/>
            <person name="Lewis S.E."/>
            <person name="Richards S."/>
            <person name="Ashburner M."/>
            <person name="Henderson S.N."/>
            <person name="Sutton G.G."/>
            <person name="Wortman J.R."/>
            <person name="Yandell M.D."/>
            <person name="Zhang Q."/>
            <person name="Chen L.X."/>
            <person name="Brandon R.C."/>
            <person name="Rogers Y.-H.C."/>
            <person name="Blazej R.G."/>
            <person name="Champe M."/>
            <person name="Pfeiffer B.D."/>
            <person name="Wan K.H."/>
            <person name="Doyle C."/>
            <person name="Baxter E.G."/>
            <person name="Helt G."/>
            <person name="Nelson C.R."/>
            <person name="Miklos G.L.G."/>
            <person name="Abril J.F."/>
            <person name="Agbayani A."/>
            <person name="An H.-J."/>
            <person name="Andrews-Pfannkoch C."/>
            <person name="Baldwin D."/>
            <person name="Ballew R.M."/>
            <person name="Basu A."/>
            <person name="Baxendale J."/>
            <person name="Bayraktaroglu L."/>
            <person name="Beasley E.M."/>
            <person name="Beeson K.Y."/>
            <person name="Benos P.V."/>
            <person name="Berman B.P."/>
            <person name="Bhandari D."/>
            <person name="Bolshakov S."/>
            <person name="Borkova D."/>
            <person name="Botchan M.R."/>
            <person name="Bouck J."/>
            <person name="Brokstein P."/>
            <person name="Brottier P."/>
            <person name="Burtis K.C."/>
            <person name="Busam D.A."/>
            <person name="Butler H."/>
            <person name="Cadieu E."/>
            <person name="Center A."/>
            <person name="Chandra I."/>
            <person name="Cherry J.M."/>
            <person name="Cawley S."/>
            <person name="Dahlke C."/>
            <person name="Davenport L.B."/>
            <person name="Davies P."/>
            <person name="de Pablos B."/>
            <person name="Delcher A."/>
            <person name="Deng Z."/>
            <person name="Mays A.D."/>
            <person name="Dew I."/>
            <person name="Dietz S.M."/>
            <person name="Dodson K."/>
            <person name="Doup L.E."/>
            <person name="Downes M."/>
            <person name="Dugan-Rocha S."/>
            <person name="Dunkov B.C."/>
            <person name="Dunn P."/>
            <person name="Durbin K.J."/>
            <person name="Evangelista C.C."/>
            <person name="Ferraz C."/>
            <person name="Ferriera S."/>
            <person name="Fleischmann W."/>
            <person name="Fosler C."/>
            <person name="Gabrielian A.E."/>
            <person name="Garg N.S."/>
            <person name="Gelbart W.M."/>
            <person name="Glasser K."/>
            <person name="Glodek A."/>
            <person name="Gong F."/>
            <person name="Gorrell J.H."/>
            <person name="Gu Z."/>
            <person name="Guan P."/>
            <person name="Harris M."/>
            <person name="Harris N.L."/>
            <person name="Harvey D.A."/>
            <person name="Heiman T.J."/>
            <person name="Hernandez J.R."/>
            <person name="Houck J."/>
            <person name="Hostin D."/>
            <person name="Houston K.A."/>
            <person name="Howland T.J."/>
            <person name="Wei M.-H."/>
            <person name="Ibegwam C."/>
            <person name="Jalali M."/>
            <person name="Kalush F."/>
            <person name="Karpen G.H."/>
            <person name="Ke Z."/>
            <person name="Kennison J.A."/>
            <person name="Ketchum K.A."/>
            <person name="Kimmel B.E."/>
            <person name="Kodira C.D."/>
            <person name="Kraft C.L."/>
            <person name="Kravitz S."/>
            <person name="Kulp D."/>
            <person name="Lai Z."/>
            <person name="Lasko P."/>
            <person name="Lei Y."/>
            <person name="Levitsky A.A."/>
            <person name="Li J.H."/>
            <person name="Li Z."/>
            <person name="Liang Y."/>
            <person name="Lin X."/>
            <person name="Liu X."/>
            <person name="Mattei B."/>
            <person name="McIntosh T.C."/>
            <person name="McLeod M.P."/>
            <person name="McPherson D."/>
            <person name="Merkulov G."/>
            <person name="Milshina N.V."/>
            <person name="Mobarry C."/>
            <person name="Morris J."/>
            <person name="Moshrefi A."/>
            <person name="Mount S.M."/>
            <person name="Moy M."/>
            <person name="Murphy B."/>
            <person name="Murphy L."/>
            <person name="Muzny D.M."/>
            <person name="Nelson D.L."/>
            <person name="Nelson D.R."/>
            <person name="Nelson K.A."/>
            <person name="Nixon K."/>
            <person name="Nusskern D.R."/>
            <person name="Pacleb J.M."/>
            <person name="Palazzolo M."/>
            <person name="Pittman G.S."/>
            <person name="Pan S."/>
            <person name="Pollard J."/>
            <person name="Puri V."/>
            <person name="Reese M.G."/>
            <person name="Reinert K."/>
            <person name="Remington K."/>
            <person name="Saunders R.D.C."/>
            <person name="Scheeler F."/>
            <person name="Shen H."/>
            <person name="Shue B.C."/>
            <person name="Siden-Kiamos I."/>
            <person name="Simpson M."/>
            <person name="Skupski M.P."/>
            <person name="Smith T.J."/>
            <person name="Spier E."/>
            <person name="Spradling A.C."/>
            <person name="Stapleton M."/>
            <person name="Strong R."/>
            <person name="Sun E."/>
            <person name="Svirskas R."/>
            <person name="Tector C."/>
            <person name="Turner R."/>
            <person name="Venter E."/>
            <person name="Wang A.H."/>
            <person name="Wang X."/>
            <person name="Wang Z.-Y."/>
            <person name="Wassarman D.A."/>
            <person name="Weinstock G.M."/>
            <person name="Weissenbach J."/>
            <person name="Williams S.M."/>
            <person name="Woodage T."/>
            <person name="Worley K.C."/>
            <person name="Wu D."/>
            <person name="Yang S."/>
            <person name="Yao Q.A."/>
            <person name="Ye J."/>
            <person name="Yeh R.-F."/>
            <person name="Zaveri J.S."/>
            <person name="Zhan M."/>
            <person name="Zhang G."/>
            <person name="Zhao Q."/>
            <person name="Zheng L."/>
            <person name="Zheng X.H."/>
            <person name="Zhong F.N."/>
            <person name="Zhong W."/>
            <person name="Zhou X."/>
            <person name="Zhu S.C."/>
            <person name="Zhu X."/>
            <person name="Smith H.O."/>
            <person name="Gibbs R.A."/>
            <person name="Myers E.W."/>
            <person name="Rubin G.M."/>
            <person name="Venter J.C."/>
        </authorList>
    </citation>
    <scope>NUCLEOTIDE SEQUENCE [LARGE SCALE GENOMIC DNA]</scope>
    <source>
        <strain>Berkeley</strain>
    </source>
</reference>
<reference key="3">
    <citation type="journal article" date="2002" name="Genome Biol.">
        <title>Annotation of the Drosophila melanogaster euchromatic genome: a systematic review.</title>
        <authorList>
            <person name="Misra S."/>
            <person name="Crosby M.A."/>
            <person name="Mungall C.J."/>
            <person name="Matthews B.B."/>
            <person name="Campbell K.S."/>
            <person name="Hradecky P."/>
            <person name="Huang Y."/>
            <person name="Kaminker J.S."/>
            <person name="Millburn G.H."/>
            <person name="Prochnik S.E."/>
            <person name="Smith C.D."/>
            <person name="Tupy J.L."/>
            <person name="Whitfield E.J."/>
            <person name="Bayraktaroglu L."/>
            <person name="Berman B.P."/>
            <person name="Bettencourt B.R."/>
            <person name="Celniker S.E."/>
            <person name="de Grey A.D.N.J."/>
            <person name="Drysdale R.A."/>
            <person name="Harris N.L."/>
            <person name="Richter J."/>
            <person name="Russo S."/>
            <person name="Schroeder A.J."/>
            <person name="Shu S.Q."/>
            <person name="Stapleton M."/>
            <person name="Yamada C."/>
            <person name="Ashburner M."/>
            <person name="Gelbart W.M."/>
            <person name="Rubin G.M."/>
            <person name="Lewis S.E."/>
        </authorList>
    </citation>
    <scope>GENOME REANNOTATION</scope>
    <source>
        <strain>Berkeley</strain>
    </source>
</reference>
<protein>
    <recommendedName>
        <fullName>Protein suppressor 2 of zeste</fullName>
    </recommendedName>
    <alternativeName>
        <fullName>Protein posterior sex combs</fullName>
    </alternativeName>
</protein>
<accession>P25172</accession>
<accession>Q9V6J0</accession>
<keyword id="KW-0217">Developmental protein</keyword>
<keyword id="KW-0238">DNA-binding</keyword>
<keyword id="KW-0479">Metal-binding</keyword>
<keyword id="KW-0539">Nucleus</keyword>
<keyword id="KW-1185">Reference proteome</keyword>
<keyword id="KW-0862">Zinc</keyword>
<keyword id="KW-0863">Zinc-finger</keyword>
<sequence>MHLQNTHNTMESNAAMDAASPASRDVRQFHDLITCRLCRGYMIDPTTVDYCYHTYCRSCILKHLLRAVYCPECKASGGKEINELNLKSDDTLRSLIYKLVPGLYQRECKELADFKEQHDLVDEQTTDEPEFFTTTELISLSLEYHPAMLHQCGPGEVPPTIYLQCAAGLPVELLKRFLCSKYNIETDNGLVEVEVTYKDEVLPTNFTLMDVAYCYNWSRESPMAFCYRILLYDNEQTKNDENNLSRINQDIEPEHSVRRSKSAKSVTFAEDLESEIDSGSPRSKVRCKTPPKVSPSSKNKRLTSSKREAEPESPVSNFKSLRSNDMRYSDYAVSKVKSEPEQEQFLLPREREQQPLEANTNIVVSIPPSQLRKSYVDAEDFELKTANRKGVGHLPKLKIELNSMKSKLSMPLSAGPRLEDTSCSLSCSAQQLDLETYAKNIGLKPIEQPLQQSASNPDSKYSPNASPMSSCSSSTNGSSSSLGTADASTSTSTSSSHRKRKKKHSKEPKDANGKRKKLHAEISSQTDGKMKVKITAKPNHKLDFKRSHSLASGELDLQKLKLDSTSTSEALNRTLGEEARSINSLVVGGAPTPPPTPTAEPEQQQQQQQQQQQPQQQQQQQQQQQQQQQFVVLPKIKDLTLPTSPPLPPSLFKAYTPSTTPTAPHTVAGGKPKQQQQQMPQQPQAVLQQSLAKTNPAKPPLSSNNNRKPNSGHFAVPQAPTHRNMYHMQRYQSTPSSIASAANKMPKRSMSLDESHPAKQARLSQAQAMASSYAAKLHMQTSNQAKSQAAAFLPNPQMRSYGLPDLGSKPTLPMLCPASSSSQVTITPRPRATPSIYSFSEPNIHVPALEIVRLPVNKQSAGGKGLTMPPLSPPATSSARLMGPPAALPKHAGHGHGAAKRSCQMPTMPMPLPLPLPMPMTTIPAIVKSPPLSVALSGQRNNKGNSSNSNAYRTSPPALINLRNTAAPQHSFPSKSSPKVEANSKKSPPAAGCQGKTNGTAALDKSKTSLREFRPAVQSAVTATATTSVTTAAGAGAGAGTGTGTALAKDADILDLSANPGRSNNDAKLAPNSPPAGNNNNNNNNNNNNNNNNNNNNNNSTSNSLEAALNKIKQNISANSNGGPSTTSGSNSNGTTNGDDLQNLHMLSESATAREKISIKAASSGNGSGSTSSSSAKPKNANALVRPQNASVRSIPNPSALAFRNQPAAASTAASISKPLTVRAEEKPKVSTSNPGSLSPTNTSSSSSSSSSGSSGCSAATSPRAMTKKPTTIDQVAANLNIRAEAKAAALAEEAPPVLSSNAAKSPELAKTTTAVALRPEPKETPITVSAASTLLTIPSAVSSVSAVPETMAKPPVQIANAPVASSA</sequence>
<feature type="chain" id="PRO_0000056389" description="Protein suppressor 2 of zeste">
    <location>
        <begin position="1"/>
        <end position="1368"/>
    </location>
</feature>
<feature type="zinc finger region" description="RING-type" evidence="1">
    <location>
        <begin position="35"/>
        <end position="74"/>
    </location>
</feature>
<feature type="region of interest" description="Disordered" evidence="2">
    <location>
        <begin position="245"/>
        <end position="321"/>
    </location>
</feature>
<feature type="region of interest" description="Disordered" evidence="2">
    <location>
        <begin position="448"/>
        <end position="628"/>
    </location>
</feature>
<feature type="region of interest" description="Disordered" evidence="2">
    <location>
        <begin position="640"/>
        <end position="718"/>
    </location>
</feature>
<feature type="region of interest" description="Disordered" evidence="2">
    <location>
        <begin position="861"/>
        <end position="903"/>
    </location>
</feature>
<feature type="region of interest" description="Disordered" evidence="2">
    <location>
        <begin position="935"/>
        <end position="1001"/>
    </location>
</feature>
<feature type="region of interest" description="Disordered" evidence="2">
    <location>
        <begin position="1057"/>
        <end position="1103"/>
    </location>
</feature>
<feature type="region of interest" description="Disordered" evidence="2">
    <location>
        <begin position="1116"/>
        <end position="1141"/>
    </location>
</feature>
<feature type="region of interest" description="Disordered" evidence="2">
    <location>
        <begin position="1161"/>
        <end position="1193"/>
    </location>
</feature>
<feature type="region of interest" description="Disordered" evidence="2">
    <location>
        <begin position="1211"/>
        <end position="1271"/>
    </location>
</feature>
<feature type="region of interest" description="Disordered" evidence="2">
    <location>
        <begin position="1298"/>
        <end position="1322"/>
    </location>
</feature>
<feature type="compositionally biased region" description="Polar residues" evidence="2">
    <location>
        <begin position="449"/>
        <end position="461"/>
    </location>
</feature>
<feature type="compositionally biased region" description="Low complexity" evidence="2">
    <location>
        <begin position="462"/>
        <end position="495"/>
    </location>
</feature>
<feature type="compositionally biased region" description="Basic residues" evidence="2">
    <location>
        <begin position="496"/>
        <end position="506"/>
    </location>
</feature>
<feature type="compositionally biased region" description="Low complexity" evidence="2">
    <location>
        <begin position="599"/>
        <end position="628"/>
    </location>
</feature>
<feature type="compositionally biased region" description="Low complexity" evidence="2">
    <location>
        <begin position="672"/>
        <end position="689"/>
    </location>
</feature>
<feature type="compositionally biased region" description="Polar residues" evidence="2">
    <location>
        <begin position="936"/>
        <end position="953"/>
    </location>
</feature>
<feature type="compositionally biased region" description="Polar residues" evidence="2">
    <location>
        <begin position="962"/>
        <end position="977"/>
    </location>
</feature>
<feature type="compositionally biased region" description="Low complexity" evidence="2">
    <location>
        <begin position="1078"/>
        <end position="1099"/>
    </location>
</feature>
<feature type="compositionally biased region" description="Low complexity" evidence="2">
    <location>
        <begin position="1119"/>
        <end position="1138"/>
    </location>
</feature>
<feature type="compositionally biased region" description="Low complexity" evidence="2">
    <location>
        <begin position="1161"/>
        <end position="1183"/>
    </location>
</feature>
<feature type="compositionally biased region" description="Low complexity" evidence="2">
    <location>
        <begin position="1231"/>
        <end position="1263"/>
    </location>
</feature>
<feature type="sequence conflict" description="In Ref. 1; CAA40134/CAA40135." evidence="4" ref="1">
    <original>A</original>
    <variation>T</variation>
    <location>
        <position position="19"/>
    </location>
</feature>
<feature type="sequence conflict" description="In Ref. 1; CAA40134/CAA40135." evidence="4" ref="1">
    <original>L</original>
    <variation>S</variation>
    <location>
        <position position="425"/>
    </location>
</feature>
<feature type="sequence conflict" description="In Ref. 1; CAA40134." evidence="4" ref="1">
    <original>QPQ</original>
    <variation>P</variation>
    <location>
        <begin position="613"/>
        <end position="615"/>
    </location>
</feature>
<feature type="sequence conflict" description="In Ref. 1; CAA40135." evidence="4" ref="1">
    <location>
        <position position="615"/>
    </location>
</feature>
<feature type="sequence conflict" description="In Ref. 1; CAA40134/CAA40135." evidence="4" ref="1">
    <original>L</original>
    <variation>M</variation>
    <location>
        <position position="691"/>
    </location>
</feature>
<feature type="sequence conflict" description="In Ref. 1; CAA40134." evidence="4" ref="1">
    <original>K</original>
    <variation>N</variation>
    <location>
        <position position="786"/>
    </location>
</feature>
<feature type="sequence conflict" description="In Ref. 1; CAA40134." evidence="4" ref="1">
    <original>A</original>
    <variation>R</variation>
    <location>
        <position position="832"/>
    </location>
</feature>
<feature type="sequence conflict" description="In Ref. 1; CAA40134." evidence="4" ref="1">
    <location>
        <position position="966"/>
    </location>
</feature>
<feature type="sequence conflict" description="In Ref. 1; CAA40134." evidence="4" ref="1">
    <original>D</original>
    <variation>E</variation>
    <location>
        <position position="1066"/>
    </location>
</feature>
<feature type="sequence conflict" description="In Ref. 1; CAA40135." evidence="4" ref="1">
    <location>
        <begin position="1078"/>
        <end position="1079"/>
    </location>
</feature>
<feature type="sequence conflict" description="In Ref. 1; CAA40134." evidence="4" ref="1">
    <original>A</original>
    <variation>P</variation>
    <location>
        <position position="1290"/>
    </location>
</feature>